<comment type="function">
    <text evidence="1">Redox regulated molecular chaperone. Protects both thermally unfolding and oxidatively damaged proteins from irreversible aggregation. Plays an important role in the bacterial defense system toward oxidative stress.</text>
</comment>
<comment type="subcellular location">
    <subcellularLocation>
        <location evidence="1">Cytoplasm</location>
    </subcellularLocation>
</comment>
<comment type="PTM">
    <text evidence="1">Under oxidizing conditions two disulfide bonds are formed involving the reactive cysteines. Under reducing conditions zinc is bound to the reactive cysteines and the protein is inactive.</text>
</comment>
<comment type="similarity">
    <text evidence="1">Belongs to the HSP33 family.</text>
</comment>
<organism>
    <name type="scientific">Haemophilus influenzae (strain PittGG)</name>
    <dbReference type="NCBI Taxonomy" id="374931"/>
    <lineage>
        <taxon>Bacteria</taxon>
        <taxon>Pseudomonadati</taxon>
        <taxon>Pseudomonadota</taxon>
        <taxon>Gammaproteobacteria</taxon>
        <taxon>Pasteurellales</taxon>
        <taxon>Pasteurellaceae</taxon>
        <taxon>Haemophilus</taxon>
    </lineage>
</organism>
<evidence type="ECO:0000255" key="1">
    <source>
        <dbReference type="HAMAP-Rule" id="MF_00117"/>
    </source>
</evidence>
<sequence>MTNQQDYTQDNDKLYRYLFQHRAVRGEWVRLNKTFTDTLNTHQYPKAVQDLLGEMMVATNLLTATLKFDGNITVQIQGDGPLRLALVNGNDQQQIRALARVDGNITENMSLHNMIGKGVLVITIAPKEGERYQGVISLDKPTITECLEDYFVRSEQLQTQLIIRTGEYEGKPVAAGMLLQIMPDGSGTPEDFEHLTTLAATVKDEELFGLPAEELLYRLYHEETVNLYPAQDVQFFCGCSAERSSSALLLISDEEIDEILAEHKGSIDMQCECCGTHYFFNKEAIEKLKSTKV</sequence>
<protein>
    <recommendedName>
        <fullName evidence="1">33 kDa chaperonin</fullName>
    </recommendedName>
    <alternativeName>
        <fullName evidence="1">Heat shock protein 33 homolog</fullName>
        <shortName evidence="1">HSP33</shortName>
    </alternativeName>
</protein>
<gene>
    <name evidence="1" type="primary">hslO</name>
    <name type="ordered locus">CGSHiGG_07545</name>
</gene>
<proteinExistence type="inferred from homology"/>
<dbReference type="EMBL" id="CP000672">
    <property type="protein sequence ID" value="ABR00368.1"/>
    <property type="molecule type" value="Genomic_DNA"/>
</dbReference>
<dbReference type="SMR" id="A5UHW2"/>
<dbReference type="KEGG" id="hiq:CGSHiGG_07545"/>
<dbReference type="HOGENOM" id="CLU_054493_0_0_6"/>
<dbReference type="Proteomes" id="UP000001990">
    <property type="component" value="Chromosome"/>
</dbReference>
<dbReference type="GO" id="GO:0005737">
    <property type="term" value="C:cytoplasm"/>
    <property type="evidence" value="ECO:0007669"/>
    <property type="project" value="UniProtKB-SubCell"/>
</dbReference>
<dbReference type="GO" id="GO:0044183">
    <property type="term" value="F:protein folding chaperone"/>
    <property type="evidence" value="ECO:0007669"/>
    <property type="project" value="TreeGrafter"/>
</dbReference>
<dbReference type="GO" id="GO:0051082">
    <property type="term" value="F:unfolded protein binding"/>
    <property type="evidence" value="ECO:0007669"/>
    <property type="project" value="UniProtKB-UniRule"/>
</dbReference>
<dbReference type="GO" id="GO:0042026">
    <property type="term" value="P:protein refolding"/>
    <property type="evidence" value="ECO:0007669"/>
    <property type="project" value="TreeGrafter"/>
</dbReference>
<dbReference type="CDD" id="cd00498">
    <property type="entry name" value="Hsp33"/>
    <property type="match status" value="1"/>
</dbReference>
<dbReference type="Gene3D" id="1.10.287.480">
    <property type="entry name" value="helix hairpin bin"/>
    <property type="match status" value="1"/>
</dbReference>
<dbReference type="Gene3D" id="3.55.30.10">
    <property type="entry name" value="Hsp33 domain"/>
    <property type="match status" value="1"/>
</dbReference>
<dbReference type="Gene3D" id="3.90.1280.10">
    <property type="entry name" value="HSP33 redox switch-like"/>
    <property type="match status" value="1"/>
</dbReference>
<dbReference type="HAMAP" id="MF_00117">
    <property type="entry name" value="HslO"/>
    <property type="match status" value="1"/>
</dbReference>
<dbReference type="InterPro" id="IPR000397">
    <property type="entry name" value="Heat_shock_Hsp33"/>
</dbReference>
<dbReference type="InterPro" id="IPR016154">
    <property type="entry name" value="Heat_shock_Hsp33_C"/>
</dbReference>
<dbReference type="InterPro" id="IPR016153">
    <property type="entry name" value="Heat_shock_Hsp33_N"/>
</dbReference>
<dbReference type="InterPro" id="IPR023212">
    <property type="entry name" value="Hsp33_helix_hairpin_bin_dom_sf"/>
</dbReference>
<dbReference type="NCBIfam" id="NF001033">
    <property type="entry name" value="PRK00114.1"/>
    <property type="match status" value="1"/>
</dbReference>
<dbReference type="PANTHER" id="PTHR30111">
    <property type="entry name" value="33 KDA CHAPERONIN"/>
    <property type="match status" value="1"/>
</dbReference>
<dbReference type="PANTHER" id="PTHR30111:SF1">
    <property type="entry name" value="33 KDA CHAPERONIN"/>
    <property type="match status" value="1"/>
</dbReference>
<dbReference type="Pfam" id="PF01430">
    <property type="entry name" value="HSP33"/>
    <property type="match status" value="1"/>
</dbReference>
<dbReference type="PIRSF" id="PIRSF005261">
    <property type="entry name" value="Heat_shock_Hsp33"/>
    <property type="match status" value="1"/>
</dbReference>
<dbReference type="SUPFAM" id="SSF64397">
    <property type="entry name" value="Hsp33 domain"/>
    <property type="match status" value="1"/>
</dbReference>
<dbReference type="SUPFAM" id="SSF118352">
    <property type="entry name" value="HSP33 redox switch-like"/>
    <property type="match status" value="1"/>
</dbReference>
<name>HSLO_HAEIG</name>
<feature type="chain" id="PRO_1000015543" description="33 kDa chaperonin">
    <location>
        <begin position="1"/>
        <end position="293"/>
    </location>
</feature>
<feature type="disulfide bond" description="Redox-active" evidence="1">
    <location>
        <begin position="237"/>
        <end position="239"/>
    </location>
</feature>
<feature type="disulfide bond" description="Redox-active" evidence="1">
    <location>
        <begin position="271"/>
        <end position="274"/>
    </location>
</feature>
<reference key="1">
    <citation type="journal article" date="2007" name="Genome Biol.">
        <title>Characterization and modeling of the Haemophilus influenzae core and supragenomes based on the complete genomic sequences of Rd and 12 clinical nontypeable strains.</title>
        <authorList>
            <person name="Hogg J.S."/>
            <person name="Hu F.Z."/>
            <person name="Janto B."/>
            <person name="Boissy R."/>
            <person name="Hayes J."/>
            <person name="Keefe R."/>
            <person name="Post J.C."/>
            <person name="Ehrlich G.D."/>
        </authorList>
    </citation>
    <scope>NUCLEOTIDE SEQUENCE [LARGE SCALE GENOMIC DNA]</scope>
    <source>
        <strain>PittGG</strain>
    </source>
</reference>
<accession>A5UHW2</accession>
<keyword id="KW-0143">Chaperone</keyword>
<keyword id="KW-0963">Cytoplasm</keyword>
<keyword id="KW-1015">Disulfide bond</keyword>
<keyword id="KW-0676">Redox-active center</keyword>
<keyword id="KW-0862">Zinc</keyword>